<feature type="chain" id="PRO_0000186017" description="Disulfide-bond oxidoreductase YghU">
    <location>
        <begin position="1"/>
        <end position="288"/>
    </location>
</feature>
<feature type="domain" description="GST N-terminal">
    <location>
        <begin position="46"/>
        <end position="133"/>
    </location>
</feature>
<feature type="domain" description="GST C-terminal">
    <location>
        <begin position="139"/>
        <end position="265"/>
    </location>
</feature>
<feature type="region of interest" description="Disordered" evidence="1">
    <location>
        <begin position="260"/>
        <end position="288"/>
    </location>
</feature>
<feature type="compositionally biased region" description="Basic and acidic residues" evidence="1">
    <location>
        <begin position="268"/>
        <end position="288"/>
    </location>
</feature>
<feature type="binding site" evidence="2">
    <location>
        <position position="26"/>
    </location>
    <ligand>
        <name>glutathione</name>
        <dbReference type="ChEBI" id="CHEBI:57925"/>
        <label>2</label>
    </ligand>
</feature>
<feature type="binding site">
    <location>
        <begin position="52"/>
        <end position="54"/>
    </location>
    <ligand>
        <name>glutathione</name>
        <dbReference type="ChEBI" id="CHEBI:57925"/>
        <label>1</label>
    </ligand>
</feature>
<feature type="binding site" evidence="2">
    <location>
        <position position="87"/>
    </location>
    <ligand>
        <name>glutathione</name>
        <dbReference type="ChEBI" id="CHEBI:57925"/>
        <label>1</label>
    </ligand>
</feature>
<feature type="binding site" evidence="2">
    <location>
        <position position="101"/>
    </location>
    <ligand>
        <name>glutathione</name>
        <dbReference type="ChEBI" id="CHEBI:57925"/>
        <label>1</label>
    </ligand>
</feature>
<feature type="binding site">
    <location>
        <begin position="117"/>
        <end position="118"/>
    </location>
    <ligand>
        <name>glutathione</name>
        <dbReference type="ChEBI" id="CHEBI:57925"/>
        <label>1</label>
    </ligand>
</feature>
<feature type="binding site" evidence="2">
    <location>
        <position position="151"/>
    </location>
    <ligand>
        <name>glutathione</name>
        <dbReference type="ChEBI" id="CHEBI:57925"/>
        <label>1</label>
    </ligand>
</feature>
<feature type="binding site" evidence="2">
    <location>
        <position position="178"/>
    </location>
    <ligand>
        <name>glutathione</name>
        <dbReference type="ChEBI" id="CHEBI:57925"/>
        <label>2</label>
    </ligand>
</feature>
<feature type="turn" evidence="4">
    <location>
        <begin position="21"/>
        <end position="25"/>
    </location>
</feature>
<feature type="strand" evidence="4">
    <location>
        <begin position="42"/>
        <end position="49"/>
    </location>
</feature>
<feature type="helix" evidence="4">
    <location>
        <begin position="53"/>
        <end position="67"/>
    </location>
</feature>
<feature type="helix" evidence="4">
    <location>
        <begin position="71"/>
        <end position="73"/>
    </location>
</feature>
<feature type="strand" evidence="4">
    <location>
        <begin position="75"/>
        <end position="79"/>
    </location>
</feature>
<feature type="helix" evidence="4">
    <location>
        <begin position="82"/>
        <end position="84"/>
    </location>
</feature>
<feature type="helix" evidence="4">
    <location>
        <begin position="86"/>
        <end position="88"/>
    </location>
</feature>
<feature type="helix" evidence="4">
    <location>
        <begin position="90"/>
        <end position="95"/>
    </location>
</feature>
<feature type="strand" evidence="4">
    <location>
        <begin position="103"/>
        <end position="106"/>
    </location>
</feature>
<feature type="strand" evidence="4">
    <location>
        <begin position="109"/>
        <end position="111"/>
    </location>
</feature>
<feature type="strand" evidence="4">
    <location>
        <begin position="113"/>
        <end position="117"/>
    </location>
</feature>
<feature type="helix" evidence="4">
    <location>
        <begin position="118"/>
        <end position="129"/>
    </location>
</feature>
<feature type="helix" evidence="4">
    <location>
        <begin position="137"/>
        <end position="159"/>
    </location>
</feature>
<feature type="helix" evidence="4">
    <location>
        <begin position="161"/>
        <end position="166"/>
    </location>
</feature>
<feature type="helix" evidence="4">
    <location>
        <begin position="173"/>
        <end position="194"/>
    </location>
</feature>
<feature type="strand" evidence="4">
    <location>
        <begin position="202"/>
        <end position="204"/>
    </location>
</feature>
<feature type="helix" evidence="4">
    <location>
        <begin position="207"/>
        <end position="212"/>
    </location>
</feature>
<feature type="turn" evidence="4">
    <location>
        <begin position="213"/>
        <end position="215"/>
    </location>
</feature>
<feature type="helix" evidence="4">
    <location>
        <begin position="216"/>
        <end position="221"/>
    </location>
</feature>
<feature type="turn" evidence="4">
    <location>
        <begin position="228"/>
        <end position="232"/>
    </location>
</feature>
<feature type="helix" evidence="4">
    <location>
        <begin position="233"/>
        <end position="235"/>
    </location>
</feature>
<feature type="helix" evidence="4">
    <location>
        <begin position="237"/>
        <end position="247"/>
    </location>
</feature>
<feature type="helix" evidence="4">
    <location>
        <begin position="250"/>
        <end position="255"/>
    </location>
</feature>
<feature type="helix" evidence="4">
    <location>
        <begin position="265"/>
        <end position="267"/>
    </location>
</feature>
<feature type="strand" evidence="4">
    <location>
        <begin position="272"/>
        <end position="274"/>
    </location>
</feature>
<feature type="helix" evidence="4">
    <location>
        <begin position="277"/>
        <end position="280"/>
    </location>
</feature>
<feature type="helix" evidence="4">
    <location>
        <begin position="283"/>
        <end position="285"/>
    </location>
</feature>
<keyword id="KW-0002">3D-structure</keyword>
<keyword id="KW-0560">Oxidoreductase</keyword>
<keyword id="KW-0575">Peroxidase</keyword>
<keyword id="KW-1185">Reference proteome</keyword>
<accession>Q46845</accession>
<accession>Q2M9K6</accession>
<sequence length="288" mass="32392">MTDNTYQPAKVWTWDKSAGGAFANINRPVSGPTHEKTLPVGKHPLQLYSLGTPNGQKVTIMLEELLALGVTGAEYDAWLIRIGDGDQFSSGFVEVNPNSKIPALRDHTHNPPIRVFESGSILLYLAEKFGYFLPQDLAKRTETMNWLFWLQGAAPFLGGGFGHFYHYAPVKIEYAINRFTMEAKRLLDVLDKQLAQHKFVAGDEYTIADMAIWPWFGNVVLGGVYDAAEFLDAGSYKHVQRWAKEVGERPAVKRGRIVNRTNGPLNEQLHERHDASDFETNTEDKRQG</sequence>
<reference key="1">
    <citation type="journal article" date="1997" name="Science">
        <title>The complete genome sequence of Escherichia coli K-12.</title>
        <authorList>
            <person name="Blattner F.R."/>
            <person name="Plunkett G. III"/>
            <person name="Bloch C.A."/>
            <person name="Perna N.T."/>
            <person name="Burland V."/>
            <person name="Riley M."/>
            <person name="Collado-Vides J."/>
            <person name="Glasner J.D."/>
            <person name="Rode C.K."/>
            <person name="Mayhew G.F."/>
            <person name="Gregor J."/>
            <person name="Davis N.W."/>
            <person name="Kirkpatrick H.A."/>
            <person name="Goeden M.A."/>
            <person name="Rose D.J."/>
            <person name="Mau B."/>
            <person name="Shao Y."/>
        </authorList>
    </citation>
    <scope>NUCLEOTIDE SEQUENCE [LARGE SCALE GENOMIC DNA]</scope>
    <source>
        <strain>K12 / MG1655 / ATCC 47076</strain>
    </source>
</reference>
<reference key="2">
    <citation type="journal article" date="2006" name="Mol. Syst. Biol.">
        <title>Highly accurate genome sequences of Escherichia coli K-12 strains MG1655 and W3110.</title>
        <authorList>
            <person name="Hayashi K."/>
            <person name="Morooka N."/>
            <person name="Yamamoto Y."/>
            <person name="Fujita K."/>
            <person name="Isono K."/>
            <person name="Choi S."/>
            <person name="Ohtsubo E."/>
            <person name="Baba T."/>
            <person name="Wanner B.L."/>
            <person name="Mori H."/>
            <person name="Horiuchi T."/>
        </authorList>
    </citation>
    <scope>NUCLEOTIDE SEQUENCE [LARGE SCALE GENOMIC DNA]</scope>
    <source>
        <strain>K12 / W3110 / ATCC 27325 / DSM 5911</strain>
    </source>
</reference>
<reference key="3">
    <citation type="journal article" date="2011" name="Biochemistry">
        <title>Structure and function of YghU, a nu-class glutathione transferase related to YfcG from Escherichia coli.</title>
        <authorList>
            <person name="Stourman N.V."/>
            <person name="Branch M.C."/>
            <person name="Schaab M.R."/>
            <person name="Harp J.M."/>
            <person name="Ladner J.E."/>
            <person name="Armstrong R.N."/>
        </authorList>
    </citation>
    <scope>X-RAY CRYSTALLOGRAPHY (1.50 ANGSTROMS) IN COMPLEX WITH GLUTATHIONE</scope>
    <scope>FUNCTION</scope>
    <scope>CATALYTIC ACTIVITY</scope>
    <scope>SUBSTRATE SPECIFICITY</scope>
    <scope>KINETIC PARAMETERS</scope>
    <scope>FAMILY NAME</scope>
    <scope>SUBUNIT</scope>
    <source>
        <strain>K12</strain>
    </source>
</reference>
<organism>
    <name type="scientific">Escherichia coli (strain K12)</name>
    <dbReference type="NCBI Taxonomy" id="83333"/>
    <lineage>
        <taxon>Bacteria</taxon>
        <taxon>Pseudomonadati</taxon>
        <taxon>Pseudomonadota</taxon>
        <taxon>Gammaproteobacteria</taxon>
        <taxon>Enterobacterales</taxon>
        <taxon>Enterobacteriaceae</taxon>
        <taxon>Escherichia</taxon>
    </lineage>
</organism>
<proteinExistence type="evidence at protein level"/>
<protein>
    <recommendedName>
        <fullName>Disulfide-bond oxidoreductase YghU</fullName>
        <ecNumber>1.8.4.-</ecNumber>
    </recommendedName>
    <alternativeName>
        <fullName>GSH-dependent disulfide-bond oxidoreductase YghU</fullName>
    </alternativeName>
    <alternativeName>
        <fullName>GST N2-2</fullName>
    </alternativeName>
    <alternativeName>
        <fullName>Organic hydroperoxidase</fullName>
        <ecNumber>1.11.1.-</ecNumber>
    </alternativeName>
</protein>
<name>YGHU_ECOLI</name>
<gene>
    <name type="primary">yghU</name>
    <name type="ordered locus">b2989</name>
    <name type="ordered locus">JW5492</name>
</gene>
<comment type="function">
    <text evidence="2">Exhibits a robust glutathione (GSH)-dependent disulfide-bond reductase activity toward the model substrate, 2-hydroxyethyl disulfide; the actual physiological substrates are not known. Also displays a modest GSH-dependent peroxidase activity toward several organic hydroperoxides, such as cumene hydroperoxide and linoleic acid 13(S)-hydroperoxide, but does not reduce H(2)O(2) or tert-butyl hydroperoxide at appreciable rates. Exhibits little or no GSH transferase activity with most typical electrophilic substrates, and has no detectable transferase activity toward 1-chloro-2,4-dinitrobenzene (CDNB) with glutathionylspermidine (GspSH) as the nucleophilic substrate.</text>
</comment>
<comment type="biophysicochemical properties">
    <kinetics>
        <KM evidence="2">80 uM for glutathione (when assaying the GSH transferase activity with CDNB)</KM>
        <KM evidence="2">1.1 mM for glutathione (when assaying the disulfide-bond reductase activity with 2-hydroxyethyl disulfide)</KM>
        <KM evidence="2">16 uM for cumene hydroperoxide</KM>
        <KM evidence="2">130 uM for linoleic acid 13(S)-hydroperoxide</KM>
        <KM evidence="2">28 uM for 15(S)-HpETE</KM>
        <text>kcat is 74 sec(-1) for the disulfide-bond reductase reaction toward 2-hydroxyethyl disulfide. kcat is 0.050, 0.19 and 0.096 sec(-1) for the hydroperoxidase reaction with cumene hydroperoxide, linoleic acid 13(S)-hydroperoxide, and 15(S)-HpETE as substrate, respectively. kcat is 0.109 sec(-1) for the GSH transferase reaction with CDNB as substrate.</text>
    </kinetics>
</comment>
<comment type="subunit">
    <text evidence="2">Homodimer.</text>
</comment>
<comment type="miscellaneous">
    <text>Binds two molecules of GSH in each active site; there is one tight and one weak binding site for GSH.</text>
</comment>
<comment type="similarity">
    <text evidence="3">Belongs to the GST superfamily. Nu-class GSH transferase family.</text>
</comment>
<comment type="sequence caution" evidence="3">
    <conflict type="erroneous initiation">
        <sequence resource="EMBL-CDS" id="AAA69156"/>
    </conflict>
    <text>Extended N-terminus.</text>
</comment>
<dbReference type="EC" id="1.8.4.-"/>
<dbReference type="EC" id="1.11.1.-"/>
<dbReference type="EMBL" id="U28377">
    <property type="protein sequence ID" value="AAA69156.1"/>
    <property type="status" value="ALT_INIT"/>
    <property type="molecule type" value="Genomic_DNA"/>
</dbReference>
<dbReference type="EMBL" id="U00096">
    <property type="protein sequence ID" value="AAC76025.2"/>
    <property type="molecule type" value="Genomic_DNA"/>
</dbReference>
<dbReference type="EMBL" id="AP009048">
    <property type="protein sequence ID" value="BAE77050.1"/>
    <property type="molecule type" value="Genomic_DNA"/>
</dbReference>
<dbReference type="RefSeq" id="NP_417463.4">
    <property type="nucleotide sequence ID" value="NC_000913.3"/>
</dbReference>
<dbReference type="RefSeq" id="WP_001295515.1">
    <property type="nucleotide sequence ID" value="NZ_STEB01000001.1"/>
</dbReference>
<dbReference type="PDB" id="3C8E">
    <property type="method" value="X-ray"/>
    <property type="resolution" value="1.50 A"/>
    <property type="chains" value="A/B=1-288"/>
</dbReference>
<dbReference type="PDBsum" id="3C8E"/>
<dbReference type="SMR" id="Q46845"/>
<dbReference type="BioGRID" id="4261179">
    <property type="interactions" value="20"/>
</dbReference>
<dbReference type="DIP" id="DIP-12212N"/>
<dbReference type="FunCoup" id="Q46845">
    <property type="interactions" value="20"/>
</dbReference>
<dbReference type="STRING" id="511145.b2989"/>
<dbReference type="jPOST" id="Q46845"/>
<dbReference type="PaxDb" id="511145-b2989"/>
<dbReference type="EnsemblBacteria" id="AAC76025">
    <property type="protein sequence ID" value="AAC76025"/>
    <property type="gene ID" value="b2989"/>
</dbReference>
<dbReference type="GeneID" id="75173122"/>
<dbReference type="GeneID" id="947472"/>
<dbReference type="KEGG" id="ecj:JW5492"/>
<dbReference type="KEGG" id="eco:b2989"/>
<dbReference type="KEGG" id="ecoc:C3026_16350"/>
<dbReference type="PATRIC" id="fig|1411691.4.peg.3740"/>
<dbReference type="EchoBASE" id="EB2827"/>
<dbReference type="eggNOG" id="COG0625">
    <property type="taxonomic scope" value="Bacteria"/>
</dbReference>
<dbReference type="HOGENOM" id="CLU_011226_14_4_6"/>
<dbReference type="InParanoid" id="Q46845"/>
<dbReference type="OMA" id="GHSGAEY"/>
<dbReference type="OrthoDB" id="9803562at2"/>
<dbReference type="PhylomeDB" id="Q46845"/>
<dbReference type="BioCyc" id="EcoCyc:G7553-MONOMER"/>
<dbReference type="BioCyc" id="MetaCyc:G7553-MONOMER"/>
<dbReference type="EvolutionaryTrace" id="Q46845"/>
<dbReference type="PRO" id="PR:Q46845"/>
<dbReference type="Proteomes" id="UP000000625">
    <property type="component" value="Chromosome"/>
</dbReference>
<dbReference type="GO" id="GO:0005737">
    <property type="term" value="C:cytoplasm"/>
    <property type="evidence" value="ECO:0000318"/>
    <property type="project" value="GO_Central"/>
</dbReference>
<dbReference type="GO" id="GO:0015036">
    <property type="term" value="F:disulfide oxidoreductase activity"/>
    <property type="evidence" value="ECO:0000314"/>
    <property type="project" value="EcoCyc"/>
</dbReference>
<dbReference type="GO" id="GO:0004364">
    <property type="term" value="F:glutathione transferase activity"/>
    <property type="evidence" value="ECO:0000318"/>
    <property type="project" value="GO_Central"/>
</dbReference>
<dbReference type="GO" id="GO:0004601">
    <property type="term" value="F:peroxidase activity"/>
    <property type="evidence" value="ECO:0007669"/>
    <property type="project" value="UniProtKB-KW"/>
</dbReference>
<dbReference type="GO" id="GO:0042803">
    <property type="term" value="F:protein homodimerization activity"/>
    <property type="evidence" value="ECO:0000314"/>
    <property type="project" value="EcoCyc"/>
</dbReference>
<dbReference type="CDD" id="cd10292">
    <property type="entry name" value="GST_C_YghU_like"/>
    <property type="match status" value="1"/>
</dbReference>
<dbReference type="CDD" id="cd03048">
    <property type="entry name" value="GST_N_Ure2p_like"/>
    <property type="match status" value="1"/>
</dbReference>
<dbReference type="FunFam" id="1.20.1050.10:FF:000025">
    <property type="entry name" value="Glutathione S-transferase domain protein"/>
    <property type="match status" value="1"/>
</dbReference>
<dbReference type="Gene3D" id="1.20.1050.10">
    <property type="match status" value="1"/>
</dbReference>
<dbReference type="Gene3D" id="3.40.30.10">
    <property type="entry name" value="Glutaredoxin"/>
    <property type="match status" value="1"/>
</dbReference>
<dbReference type="InterPro" id="IPR010987">
    <property type="entry name" value="Glutathione-S-Trfase_C-like"/>
</dbReference>
<dbReference type="InterPro" id="IPR036282">
    <property type="entry name" value="Glutathione-S-Trfase_C_sf"/>
</dbReference>
<dbReference type="InterPro" id="IPR040079">
    <property type="entry name" value="Glutathione_S-Trfase"/>
</dbReference>
<dbReference type="InterPro" id="IPR004045">
    <property type="entry name" value="Glutathione_S-Trfase_N"/>
</dbReference>
<dbReference type="InterPro" id="IPR036249">
    <property type="entry name" value="Thioredoxin-like_sf"/>
</dbReference>
<dbReference type="NCBIfam" id="NF008731">
    <property type="entry name" value="PRK11752.1"/>
    <property type="match status" value="1"/>
</dbReference>
<dbReference type="PANTHER" id="PTHR44051:SF22">
    <property type="entry name" value="DISULFIDE-BOND OXIDOREDUCTASE YGHU"/>
    <property type="match status" value="1"/>
</dbReference>
<dbReference type="PANTHER" id="PTHR44051">
    <property type="entry name" value="GLUTATHIONE S-TRANSFERASE-RELATED"/>
    <property type="match status" value="1"/>
</dbReference>
<dbReference type="Pfam" id="PF13410">
    <property type="entry name" value="GST_C_2"/>
    <property type="match status" value="1"/>
</dbReference>
<dbReference type="Pfam" id="PF13409">
    <property type="entry name" value="GST_N_2"/>
    <property type="match status" value="1"/>
</dbReference>
<dbReference type="SFLD" id="SFLDS00019">
    <property type="entry name" value="Glutathione_Transferase_(cytos"/>
    <property type="match status" value="1"/>
</dbReference>
<dbReference type="SFLD" id="SFLDG01151">
    <property type="entry name" value="Main.2:_Nu-like"/>
    <property type="match status" value="1"/>
</dbReference>
<dbReference type="SUPFAM" id="SSF47616">
    <property type="entry name" value="GST C-terminal domain-like"/>
    <property type="match status" value="1"/>
</dbReference>
<dbReference type="SUPFAM" id="SSF52833">
    <property type="entry name" value="Thioredoxin-like"/>
    <property type="match status" value="1"/>
</dbReference>
<dbReference type="PROSITE" id="PS50405">
    <property type="entry name" value="GST_CTER"/>
    <property type="match status" value="1"/>
</dbReference>
<dbReference type="PROSITE" id="PS50404">
    <property type="entry name" value="GST_NTER"/>
    <property type="match status" value="1"/>
</dbReference>
<evidence type="ECO:0000256" key="1">
    <source>
        <dbReference type="SAM" id="MobiDB-lite"/>
    </source>
</evidence>
<evidence type="ECO:0000269" key="2">
    <source>
    </source>
</evidence>
<evidence type="ECO:0000305" key="3"/>
<evidence type="ECO:0007829" key="4">
    <source>
        <dbReference type="PDB" id="3C8E"/>
    </source>
</evidence>